<protein>
    <recommendedName>
        <fullName>Alcohol dehydrogenase class-3 chain L</fullName>
        <ecNumber evidence="1">1.1.1.1</ecNumber>
    </recommendedName>
    <alternativeName>
        <fullName>Alcohol dehydrogenase class-III chain L</fullName>
    </alternativeName>
    <alternativeName>
        <fullName>Glutathione-dependent formaldehyde dehydrogenase</fullName>
        <shortName>FALDH</shortName>
        <shortName>FDH</shortName>
        <shortName>GSH-FDH</shortName>
        <ecNumber>1.1.1.-</ecNumber>
    </alternativeName>
    <alternativeName>
        <fullName>S-(hydroxymethyl)glutathione dehydrogenase</fullName>
        <ecNumber evidence="1">1.1.1.284</ecNumber>
    </alternativeName>
</protein>
<feature type="chain" id="PRO_0000160764" description="Alcohol dehydrogenase class-3 chain L">
    <location>
        <begin position="1"/>
        <end position="375"/>
    </location>
</feature>
<feature type="binding site" evidence="1">
    <location>
        <position position="46"/>
    </location>
    <ligand>
        <name>Zn(2+)</name>
        <dbReference type="ChEBI" id="CHEBI:29105"/>
        <label>1</label>
        <note>catalytic</note>
    </ligand>
</feature>
<feature type="binding site" evidence="1">
    <location>
        <position position="68"/>
    </location>
    <ligand>
        <name>Zn(2+)</name>
        <dbReference type="ChEBI" id="CHEBI:29105"/>
        <label>1</label>
        <note>catalytic</note>
    </ligand>
</feature>
<feature type="binding site" evidence="1">
    <location>
        <position position="98"/>
    </location>
    <ligand>
        <name>Zn(2+)</name>
        <dbReference type="ChEBI" id="CHEBI:29105"/>
        <label>2</label>
    </ligand>
</feature>
<feature type="binding site" evidence="1">
    <location>
        <position position="101"/>
    </location>
    <ligand>
        <name>Zn(2+)</name>
        <dbReference type="ChEBI" id="CHEBI:29105"/>
        <label>2</label>
    </ligand>
</feature>
<feature type="binding site" evidence="1">
    <location>
        <position position="104"/>
    </location>
    <ligand>
        <name>Zn(2+)</name>
        <dbReference type="ChEBI" id="CHEBI:29105"/>
        <label>2</label>
    </ligand>
</feature>
<feature type="binding site" evidence="1">
    <location>
        <position position="112"/>
    </location>
    <ligand>
        <name>Zn(2+)</name>
        <dbReference type="ChEBI" id="CHEBI:29105"/>
        <label>2</label>
    </ligand>
</feature>
<feature type="binding site" evidence="1">
    <location>
        <position position="175"/>
    </location>
    <ligand>
        <name>Zn(2+)</name>
        <dbReference type="ChEBI" id="CHEBI:29105"/>
        <label>1</label>
        <note>catalytic</note>
    </ligand>
</feature>
<feature type="site" description="Important for FDH activity and activation by fatty acids" evidence="1">
    <location>
        <position position="116"/>
    </location>
</feature>
<feature type="modified residue" description="N-acetylalanine" evidence="2 3">
    <location>
        <position position="1"/>
    </location>
</feature>
<comment type="function">
    <text evidence="1">Class-III ADH is remarkably ineffective in oxidizing ethanol, but it readily catalyzes the oxidation of long-chain primary alcohols and the oxidation of S-(hydroxymethyl) glutathione.</text>
</comment>
<comment type="catalytic activity">
    <reaction evidence="1">
        <text>a primary alcohol + NAD(+) = an aldehyde + NADH + H(+)</text>
        <dbReference type="Rhea" id="RHEA:10736"/>
        <dbReference type="ChEBI" id="CHEBI:15378"/>
        <dbReference type="ChEBI" id="CHEBI:15734"/>
        <dbReference type="ChEBI" id="CHEBI:17478"/>
        <dbReference type="ChEBI" id="CHEBI:57540"/>
        <dbReference type="ChEBI" id="CHEBI:57945"/>
        <dbReference type="EC" id="1.1.1.1"/>
    </reaction>
</comment>
<comment type="catalytic activity">
    <reaction evidence="1">
        <text>a secondary alcohol + NAD(+) = a ketone + NADH + H(+)</text>
        <dbReference type="Rhea" id="RHEA:10740"/>
        <dbReference type="ChEBI" id="CHEBI:15378"/>
        <dbReference type="ChEBI" id="CHEBI:17087"/>
        <dbReference type="ChEBI" id="CHEBI:35681"/>
        <dbReference type="ChEBI" id="CHEBI:57540"/>
        <dbReference type="ChEBI" id="CHEBI:57945"/>
        <dbReference type="EC" id="1.1.1.1"/>
    </reaction>
</comment>
<comment type="catalytic activity">
    <reaction evidence="1">
        <text>S-(hydroxymethyl)glutathione + NADP(+) = S-formylglutathione + NADPH + H(+)</text>
        <dbReference type="Rhea" id="RHEA:19981"/>
        <dbReference type="ChEBI" id="CHEBI:15378"/>
        <dbReference type="ChEBI" id="CHEBI:57688"/>
        <dbReference type="ChEBI" id="CHEBI:57783"/>
        <dbReference type="ChEBI" id="CHEBI:58349"/>
        <dbReference type="ChEBI" id="CHEBI:58758"/>
        <dbReference type="EC" id="1.1.1.284"/>
    </reaction>
</comment>
<comment type="catalytic activity">
    <reaction evidence="1">
        <text>S-(hydroxymethyl)glutathione + NAD(+) = S-formylglutathione + NADH + H(+)</text>
        <dbReference type="Rhea" id="RHEA:19985"/>
        <dbReference type="ChEBI" id="CHEBI:15378"/>
        <dbReference type="ChEBI" id="CHEBI:57540"/>
        <dbReference type="ChEBI" id="CHEBI:57688"/>
        <dbReference type="ChEBI" id="CHEBI:57945"/>
        <dbReference type="ChEBI" id="CHEBI:58758"/>
        <dbReference type="EC" id="1.1.1.284"/>
    </reaction>
</comment>
<comment type="cofactor">
    <cofactor evidence="1">
        <name>Zn(2+)</name>
        <dbReference type="ChEBI" id="CHEBI:29105"/>
    </cofactor>
    <text evidence="1">Binds 2 Zn(2+) ions per subunit.</text>
</comment>
<comment type="subunit">
    <text evidence="3">Homodimer or heterodimer with H chain.</text>
</comment>
<comment type="subcellular location">
    <subcellularLocation>
        <location evidence="4">Cytoplasm</location>
    </subcellularLocation>
</comment>
<comment type="similarity">
    <text evidence="4">Belongs to the zinc-containing alcohol dehydrogenase family. Class-III subfamily.</text>
</comment>
<name>ADHL_GADMO</name>
<evidence type="ECO:0000250" key="1">
    <source>
        <dbReference type="UniProtKB" id="P11766"/>
    </source>
</evidence>
<evidence type="ECO:0000269" key="2">
    <source>
    </source>
</evidence>
<evidence type="ECO:0000269" key="3">
    <source>
    </source>
</evidence>
<evidence type="ECO:0000305" key="4"/>
<sequence length="375" mass="39703">ATVGKTIRCRAAVAWEAGKPLSMEEVEVAPPQAGEVRIKIVATGICHTDAYTLSGSDPEGVFPSVLGHEGAGIVESVGEGVTKFKSGDAVIPLYVPQCGECKFCKNPKTNLCQKIRLTQGKGLMPNGTSRFSCNGQVLFHFMGSSTFSEYTVVAEISLAKVHEKAPLDKVCLLGCAISTGYGAALNTAKVEAGSTCAVFGLGALGLAVIMGCQAAGASRIIAIDVNPDKFRIAKEFGATDLVNPKDHSKPVEQVLVEMTDGGVDYSFECVGNIAVMRAALEACHKGWGTSVIIGVAAAGQEISTRPFQLVTGRTWKGTAFGGYKSVESVPKLVEEYMNKKVKVDEFVTHTLPFEKIHEGFDLMGAGKSIRTVLNY</sequence>
<accession>P81601</accession>
<keyword id="KW-0007">Acetylation</keyword>
<keyword id="KW-0963">Cytoplasm</keyword>
<keyword id="KW-0903">Direct protein sequencing</keyword>
<keyword id="KW-0479">Metal-binding</keyword>
<keyword id="KW-0520">NAD</keyword>
<keyword id="KW-0560">Oxidoreductase</keyword>
<keyword id="KW-1185">Reference proteome</keyword>
<keyword id="KW-0862">Zinc</keyword>
<proteinExistence type="evidence at protein level"/>
<organism>
    <name type="scientific">Gadus morhua</name>
    <name type="common">Atlantic cod</name>
    <dbReference type="NCBI Taxonomy" id="8049"/>
    <lineage>
        <taxon>Eukaryota</taxon>
        <taxon>Metazoa</taxon>
        <taxon>Chordata</taxon>
        <taxon>Craniata</taxon>
        <taxon>Vertebrata</taxon>
        <taxon>Euteleostomi</taxon>
        <taxon>Actinopterygii</taxon>
        <taxon>Neopterygii</taxon>
        <taxon>Teleostei</taxon>
        <taxon>Neoteleostei</taxon>
        <taxon>Acanthomorphata</taxon>
        <taxon>Zeiogadaria</taxon>
        <taxon>Gadariae</taxon>
        <taxon>Gadiformes</taxon>
        <taxon>Gadoidei</taxon>
        <taxon>Gadidae</taxon>
        <taxon>Gadus</taxon>
    </lineage>
</organism>
<reference key="1">
    <citation type="journal article" date="1996" name="Biochemistry">
        <title>Isozyme multiplicity with anomalous dimer patterns in a class III alcohol dehydrogenase. Effects on the activity and quaternary structure of residue exchanges at 'non-functional' sites in a native protein.</title>
        <authorList>
            <person name="Danielsson O."/>
            <person name="Shafqat J."/>
            <person name="Estonius M."/>
            <person name="El-Ahmad M."/>
            <person name="Joernvall H."/>
        </authorList>
    </citation>
    <scope>PROTEIN SEQUENCE</scope>
    <scope>SUBUNIT</scope>
    <scope>ACETYLATION AT ALA-1</scope>
</reference>
<reference key="2">
    <citation type="journal article" date="1995" name="FEBS Lett.">
        <title>Multiplicity of N-terminal structures of medium-chain alcohol dehydrogenases. Mass-spectrometric analysis of plant, lower vertebrate and higher vertebrate class I, II, and III forms of the enzyme.</title>
        <authorList>
            <person name="Hjelmqvist L."/>
            <person name="Hackett M."/>
            <person name="Shafqat J."/>
            <person name="Danielsson O."/>
            <person name="Iida J."/>
            <person name="Hendrickson R.C."/>
            <person name="Michel H."/>
            <person name="Shabanowitz J."/>
            <person name="Hunt D.F."/>
            <person name="Joernvall H."/>
        </authorList>
    </citation>
    <scope>PARTIAL PROTEIN SEQUENCE</scope>
    <scope>ACETYLATION AT ALA-1</scope>
</reference>
<dbReference type="EC" id="1.1.1.1" evidence="1"/>
<dbReference type="EC" id="1.1.1.-"/>
<dbReference type="EC" id="1.1.1.284" evidence="1"/>
<dbReference type="SMR" id="P81601"/>
<dbReference type="iPTMnet" id="P81601"/>
<dbReference type="Proteomes" id="UP000694546">
    <property type="component" value="Unplaced"/>
</dbReference>
<dbReference type="GO" id="GO:0005829">
    <property type="term" value="C:cytosol"/>
    <property type="evidence" value="ECO:0007669"/>
    <property type="project" value="TreeGrafter"/>
</dbReference>
<dbReference type="GO" id="GO:0004022">
    <property type="term" value="F:alcohol dehydrogenase (NAD+) activity"/>
    <property type="evidence" value="ECO:0007669"/>
    <property type="project" value="UniProtKB-EC"/>
</dbReference>
<dbReference type="GO" id="GO:0106322">
    <property type="term" value="F:S-(hydroxymethyl)glutathione dehydrogenase (NAD+) activity"/>
    <property type="evidence" value="ECO:0007669"/>
    <property type="project" value="RHEA"/>
</dbReference>
<dbReference type="GO" id="GO:0106321">
    <property type="term" value="F:S-(hydroxymethyl)glutathione dehydrogenase (NADP+) activity"/>
    <property type="evidence" value="ECO:0007669"/>
    <property type="project" value="RHEA"/>
</dbReference>
<dbReference type="GO" id="GO:0008270">
    <property type="term" value="F:zinc ion binding"/>
    <property type="evidence" value="ECO:0007669"/>
    <property type="project" value="InterPro"/>
</dbReference>
<dbReference type="GO" id="GO:0046294">
    <property type="term" value="P:formaldehyde catabolic process"/>
    <property type="evidence" value="ECO:0007669"/>
    <property type="project" value="InterPro"/>
</dbReference>
<dbReference type="CDD" id="cd08300">
    <property type="entry name" value="alcohol_DH_class_III"/>
    <property type="match status" value="1"/>
</dbReference>
<dbReference type="FunFam" id="3.40.50.720:FF:000003">
    <property type="entry name" value="S-(hydroxymethyl)glutathione dehydrogenase"/>
    <property type="match status" value="1"/>
</dbReference>
<dbReference type="FunFam" id="3.90.180.10:FF:000001">
    <property type="entry name" value="S-(hydroxymethyl)glutathione dehydrogenase"/>
    <property type="match status" value="1"/>
</dbReference>
<dbReference type="Gene3D" id="3.90.180.10">
    <property type="entry name" value="Medium-chain alcohol dehydrogenases, catalytic domain"/>
    <property type="match status" value="1"/>
</dbReference>
<dbReference type="Gene3D" id="3.40.50.720">
    <property type="entry name" value="NAD(P)-binding Rossmann-like Domain"/>
    <property type="match status" value="1"/>
</dbReference>
<dbReference type="InterPro" id="IPR013149">
    <property type="entry name" value="ADH-like_C"/>
</dbReference>
<dbReference type="InterPro" id="IPR013154">
    <property type="entry name" value="ADH-like_N"/>
</dbReference>
<dbReference type="InterPro" id="IPR014183">
    <property type="entry name" value="ADH_3"/>
</dbReference>
<dbReference type="InterPro" id="IPR002328">
    <property type="entry name" value="ADH_Zn_CS"/>
</dbReference>
<dbReference type="InterPro" id="IPR011032">
    <property type="entry name" value="GroES-like_sf"/>
</dbReference>
<dbReference type="InterPro" id="IPR036291">
    <property type="entry name" value="NAD(P)-bd_dom_sf"/>
</dbReference>
<dbReference type="InterPro" id="IPR020843">
    <property type="entry name" value="PKS_ER"/>
</dbReference>
<dbReference type="NCBIfam" id="TIGR02818">
    <property type="entry name" value="adh_III_F_hyde"/>
    <property type="match status" value="1"/>
</dbReference>
<dbReference type="PANTHER" id="PTHR43880">
    <property type="entry name" value="ALCOHOL DEHYDROGENASE"/>
    <property type="match status" value="1"/>
</dbReference>
<dbReference type="PANTHER" id="PTHR43880:SF21">
    <property type="entry name" value="S-(HYDROXYMETHYL)GLUTATHIONE DEHYDROGENASE"/>
    <property type="match status" value="1"/>
</dbReference>
<dbReference type="Pfam" id="PF08240">
    <property type="entry name" value="ADH_N"/>
    <property type="match status" value="1"/>
</dbReference>
<dbReference type="Pfam" id="PF00107">
    <property type="entry name" value="ADH_zinc_N"/>
    <property type="match status" value="1"/>
</dbReference>
<dbReference type="SMART" id="SM00829">
    <property type="entry name" value="PKS_ER"/>
    <property type="match status" value="1"/>
</dbReference>
<dbReference type="SUPFAM" id="SSF50129">
    <property type="entry name" value="GroES-like"/>
    <property type="match status" value="2"/>
</dbReference>
<dbReference type="SUPFAM" id="SSF51735">
    <property type="entry name" value="NAD(P)-binding Rossmann-fold domains"/>
    <property type="match status" value="1"/>
</dbReference>
<dbReference type="PROSITE" id="PS00059">
    <property type="entry name" value="ADH_ZINC"/>
    <property type="match status" value="1"/>
</dbReference>